<dbReference type="EMBL" id="AY621313">
    <property type="protein sequence ID" value="AAT45551.1"/>
    <property type="molecule type" value="mRNA"/>
</dbReference>
<dbReference type="EMBL" id="AY621326">
    <property type="protein sequence ID" value="AAT48935.1"/>
    <property type="molecule type" value="Genomic_DNA"/>
</dbReference>
<dbReference type="EMBL" id="DQ677642">
    <property type="protein sequence ID" value="ABG73376.1"/>
    <property type="molecule type" value="mRNA"/>
</dbReference>
<dbReference type="EMBL" id="DQ858308">
    <property type="protein sequence ID" value="ABI48223.1"/>
    <property type="molecule type" value="mRNA"/>
</dbReference>
<dbReference type="EMBL" id="DQ858321">
    <property type="protein sequence ID" value="ABI48237.1"/>
    <property type="molecule type" value="mRNA"/>
</dbReference>
<dbReference type="EMBL" id="DQ858334">
    <property type="protein sequence ID" value="ABI48250.1"/>
    <property type="molecule type" value="mRNA"/>
</dbReference>
<dbReference type="EMBL" id="DQ858348">
    <property type="protein sequence ID" value="ABI48264.1"/>
    <property type="molecule type" value="mRNA"/>
</dbReference>
<dbReference type="EMBL" id="DQ997047">
    <property type="protein sequence ID" value="ABJ90336.1"/>
    <property type="molecule type" value="mRNA"/>
</dbReference>
<dbReference type="PIR" id="S23981">
    <property type="entry name" value="S23981"/>
</dbReference>
<dbReference type="RefSeq" id="NP_001001779.1">
    <property type="nucleotide sequence ID" value="NM_001001779.1"/>
</dbReference>
<dbReference type="PDB" id="6QES">
    <property type="method" value="NMR"/>
    <property type="chains" value="A=23-62"/>
</dbReference>
<dbReference type="PDB" id="6QET">
    <property type="method" value="NMR"/>
    <property type="chains" value="A=63-104"/>
</dbReference>
<dbReference type="PDB" id="6QEU">
    <property type="method" value="NMR"/>
    <property type="chains" value="A=23-104"/>
</dbReference>
<dbReference type="PDBsum" id="6QES"/>
<dbReference type="PDBsum" id="6QET"/>
<dbReference type="PDBsum" id="6QEU"/>
<dbReference type="SMR" id="Q6IV20"/>
<dbReference type="STRING" id="9031.ENSGALP00000030908"/>
<dbReference type="PaxDb" id="9031-ENSGALP00000030908"/>
<dbReference type="Ensembl" id="ENSGALT00010027363.1">
    <property type="protein sequence ID" value="ENSGALP00010015617.1"/>
    <property type="gene ID" value="ENSGALG00010011435.1"/>
</dbReference>
<dbReference type="GeneID" id="414876"/>
<dbReference type="KEGG" id="gga:414876"/>
<dbReference type="CTD" id="414876"/>
<dbReference type="VEuPathDB" id="HostDB:geneid_414876"/>
<dbReference type="eggNOG" id="ENOG502R6J6">
    <property type="taxonomic scope" value="Eukaryota"/>
</dbReference>
<dbReference type="GeneTree" id="ENSGT00530000069149"/>
<dbReference type="HOGENOM" id="CLU_2249188_0_0_1"/>
<dbReference type="InParanoid" id="Q6IV20"/>
<dbReference type="OMA" id="CQDEGGH"/>
<dbReference type="OrthoDB" id="9343693at2759"/>
<dbReference type="PRO" id="PR:Q6IV20"/>
<dbReference type="Proteomes" id="UP000000539">
    <property type="component" value="Chromosome 3"/>
</dbReference>
<dbReference type="Bgee" id="ENSGALG00000019846">
    <property type="expression patterns" value="Expressed in ovary and 1 other cell type or tissue"/>
</dbReference>
<dbReference type="GO" id="GO:0005615">
    <property type="term" value="C:extracellular space"/>
    <property type="evidence" value="ECO:0000318"/>
    <property type="project" value="GO_Central"/>
</dbReference>
<dbReference type="GO" id="GO:0031731">
    <property type="term" value="F:CCR6 chemokine receptor binding"/>
    <property type="evidence" value="ECO:0000318"/>
    <property type="project" value="GO_Central"/>
</dbReference>
<dbReference type="GO" id="GO:0050829">
    <property type="term" value="P:defense response to Gram-negative bacterium"/>
    <property type="evidence" value="ECO:0000318"/>
    <property type="project" value="GO_Central"/>
</dbReference>
<dbReference type="GO" id="GO:0050830">
    <property type="term" value="P:defense response to Gram-positive bacterium"/>
    <property type="evidence" value="ECO:0000318"/>
    <property type="project" value="GO_Central"/>
</dbReference>
<dbReference type="GO" id="GO:0002227">
    <property type="term" value="P:innate immune response in mucosa"/>
    <property type="evidence" value="ECO:0000318"/>
    <property type="project" value="GO_Central"/>
</dbReference>
<dbReference type="CDD" id="cd21907">
    <property type="entry name" value="BDD1_Gal11"/>
    <property type="match status" value="1"/>
</dbReference>
<dbReference type="CDD" id="cd21906">
    <property type="entry name" value="BDD2_Gal11"/>
    <property type="match status" value="1"/>
</dbReference>
<dbReference type="PANTHER" id="PTHR21388:SF9">
    <property type="entry name" value="BETA-DEFENSIN 1"/>
    <property type="match status" value="1"/>
</dbReference>
<dbReference type="PANTHER" id="PTHR21388">
    <property type="entry name" value="BETA-DEFENSIN-RELATED"/>
    <property type="match status" value="1"/>
</dbReference>
<accession>Q6IV20</accession>
<accession>A0A1W6</accession>
<accession>Q09MT4</accession>
<accession>Q9PS49</accession>
<gene>
    <name type="primary">GAL11</name>
</gene>
<proteinExistence type="evidence at protein level"/>
<keyword id="KW-0002">3D-structure</keyword>
<keyword id="KW-0044">Antibiotic</keyword>
<keyword id="KW-0929">Antimicrobial</keyword>
<keyword id="KW-0211">Defensin</keyword>
<keyword id="KW-0903">Direct protein sequencing</keyword>
<keyword id="KW-1015">Disulfide bond</keyword>
<keyword id="KW-1185">Reference proteome</keyword>
<keyword id="KW-0964">Secreted</keyword>
<keyword id="KW-0732">Signal</keyword>
<evidence type="ECO:0000250" key="1"/>
<evidence type="ECO:0000269" key="2">
    <source>
    </source>
</evidence>
<evidence type="ECO:0000269" key="3">
    <source>
    </source>
</evidence>
<evidence type="ECO:0000269" key="4">
    <source>
    </source>
</evidence>
<evidence type="ECO:0000269" key="5">
    <source ref="2"/>
</evidence>
<evidence type="ECO:0000305" key="6"/>
<evidence type="ECO:0007829" key="7">
    <source>
        <dbReference type="PDB" id="6QES"/>
    </source>
</evidence>
<evidence type="ECO:0007829" key="8">
    <source>
        <dbReference type="PDB" id="6QET"/>
    </source>
</evidence>
<evidence type="ECO:0007829" key="9">
    <source>
        <dbReference type="PDB" id="6QEU"/>
    </source>
</evidence>
<sequence>MKLFSCLMALLLFLLQAVPGLGLPRDTSRCVGYHGYCIRSKVCPKPFAAFGTCSWRQKTCCVDTTSDFHTCQDKGGHCVSPKIRCLEEQLGLCPLKRWTCCKEI</sequence>
<organism>
    <name type="scientific">Gallus gallus</name>
    <name type="common">Chicken</name>
    <dbReference type="NCBI Taxonomy" id="9031"/>
    <lineage>
        <taxon>Eukaryota</taxon>
        <taxon>Metazoa</taxon>
        <taxon>Chordata</taxon>
        <taxon>Craniata</taxon>
        <taxon>Vertebrata</taxon>
        <taxon>Euteleostomi</taxon>
        <taxon>Archelosauria</taxon>
        <taxon>Archosauria</taxon>
        <taxon>Dinosauria</taxon>
        <taxon>Saurischia</taxon>
        <taxon>Theropoda</taxon>
        <taxon>Coelurosauria</taxon>
        <taxon>Aves</taxon>
        <taxon>Neognathae</taxon>
        <taxon>Galloanserae</taxon>
        <taxon>Galliformes</taxon>
        <taxon>Phasianidae</taxon>
        <taxon>Phasianinae</taxon>
        <taxon>Gallus</taxon>
    </lineage>
</organism>
<comment type="function">
    <text evidence="1">Has bactericidal activity.</text>
</comment>
<comment type="subcellular location">
    <subcellularLocation>
        <location>Secreted</location>
    </subcellularLocation>
    <subcellularLocation>
        <location evidence="1">Cytoplasmic granule</location>
    </subcellularLocation>
</comment>
<comment type="tissue specificity">
    <text evidence="2 3 4">Detected in outer membrane of the vitelline layer of the egg (at protein level). Expressed in the liver, gall bladder, kidney, testis, ovary and male and female reproductive tracts. Expressed in the ovarian stroma, but not in the ovarian follicles. No expression is detected in bone marrow.</text>
</comment>
<comment type="similarity">
    <text evidence="6">Belongs to the beta-defensin family.</text>
</comment>
<name>GLL11_CHICK</name>
<protein>
    <recommendedName>
        <fullName>Gallinacin-11</fullName>
        <shortName>Gal-11</shortName>
    </recommendedName>
    <alternativeName>
        <fullName>Beta-defensin 11</fullName>
    </alternativeName>
    <alternativeName>
        <fullName>Vitelline membrane outer layer protein 2</fullName>
    </alternativeName>
    <alternativeName>
        <fullName>Vitelline membrane outer layer protein II</fullName>
        <shortName>VMO-II</shortName>
        <shortName>VMOII</shortName>
    </alternativeName>
</protein>
<reference key="1">
    <citation type="journal article" date="2004" name="BMC Genomics">
        <title>A genome-wide screen identifies a single beta-defensin gene cluster in the chicken: implications for the origin and evolution of mammalian defensins.</title>
        <authorList>
            <person name="Xiao Y."/>
            <person name="Hughes A.L."/>
            <person name="Ando J."/>
            <person name="Matsuda Y."/>
            <person name="Cheng J.-F."/>
            <person name="Skinner-Noble D."/>
            <person name="Zhang G."/>
        </authorList>
    </citation>
    <scope>NUCLEOTIDE SEQUENCE [GENOMIC DNA / MRNA]</scope>
    <scope>TISSUE SPECIFICITY</scope>
</reference>
<reference key="2">
    <citation type="submission" date="2006-07" db="EMBL/GenBank/DDBJ databases">
        <title>Chicken beta-defensin in China chicken breeds.</title>
        <authorList>
            <person name="Chen Y."/>
            <person name="Cao Y."/>
            <person name="Xie Q."/>
            <person name="Bi Y."/>
            <person name="Chen J."/>
        </authorList>
    </citation>
    <scope>NUCLEOTIDE SEQUENCE [MRNA]</scope>
    <scope>VARIANT ARG-35</scope>
    <source>
        <strain>Guangxi Huang</strain>
        <strain>Huiyang bearded</strain>
        <strain>Qingyuan Ma</strain>
        <strain>Taihe silkies</strain>
        <strain>Xinghua</strain>
    </source>
</reference>
<reference key="3">
    <citation type="submission" date="2006-09" db="EMBL/GenBank/DDBJ databases">
        <title>Cloning and structure analysis of the Chongren Ma chicken beta-defensin 11 (GAL11).</title>
        <authorList>
            <person name="Kang X."/>
            <person name="Jiang R."/>
            <person name="Han R."/>
            <person name="Chen Q."/>
            <person name="Tian Y."/>
            <person name="Li G."/>
        </authorList>
    </citation>
    <scope>NUCLEOTIDE SEQUENCE [MRNA]</scope>
</reference>
<reference key="4">
    <citation type="journal article" date="1992" name="Biochem. J.">
        <title>Isolation of a novel protein from the outer layer of the vitelline membrane.</title>
        <authorList>
            <person name="Kido S."/>
            <person name="Morimoto A."/>
            <person name="Kim F."/>
            <person name="Doi Y."/>
        </authorList>
    </citation>
    <scope>PROTEIN SEQUENCE OF 23-42</scope>
    <scope>TISSUE SPECIFICITY</scope>
    <source>
        <tissue>Egg yolk</tissue>
    </source>
</reference>
<reference key="5">
    <citation type="journal article" date="2007" name="Reproduction">
        <title>Changes in the expression of gallinacins, antimicrobial peptides, in ovarian follicles during follicular growth and in response to lipopolysaccharide in laying hens (Gallus domesticus).</title>
        <authorList>
            <person name="Subedi K."/>
            <person name="Isobe N."/>
            <person name="Nishibori M."/>
            <person name="Yoshimura Y."/>
        </authorList>
    </citation>
    <scope>TISSUE SPECIFICITY</scope>
</reference>
<feature type="signal peptide" evidence="2">
    <location>
        <begin position="1"/>
        <end position="22"/>
    </location>
</feature>
<feature type="chain" id="PRO_0000288575" description="Gallinacin-11">
    <location>
        <begin position="23"/>
        <end position="104"/>
    </location>
</feature>
<feature type="disulfide bond" evidence="1">
    <location>
        <begin position="30"/>
        <end position="60"/>
    </location>
</feature>
<feature type="disulfide bond" evidence="1">
    <location>
        <begin position="37"/>
        <end position="53"/>
    </location>
</feature>
<feature type="disulfide bond" evidence="1">
    <location>
        <begin position="43"/>
        <end position="61"/>
    </location>
</feature>
<feature type="sequence variant" description="In strain: Huiyang bearded." evidence="5">
    <original>G</original>
    <variation>R</variation>
    <location>
        <position position="35"/>
    </location>
</feature>
<feature type="sequence conflict" description="In Ref. 3; ABJ90336." evidence="6" ref="3">
    <original>V</original>
    <variation>A</variation>
    <location>
        <position position="31"/>
    </location>
</feature>
<feature type="sequence conflict" description="In Ref. 3; ABJ90336." evidence="6" ref="3">
    <original>H</original>
    <variation>L</variation>
    <location>
        <position position="34"/>
    </location>
</feature>
<feature type="sequence conflict" description="In Ref. 3; ABJ90336." evidence="6" ref="3">
    <original>P</original>
    <variation>H</variation>
    <location>
        <position position="94"/>
    </location>
</feature>
<feature type="helix" evidence="7">
    <location>
        <begin position="27"/>
        <end position="31"/>
    </location>
</feature>
<feature type="strand" evidence="7">
    <location>
        <begin position="33"/>
        <end position="42"/>
    </location>
</feature>
<feature type="strand" evidence="7">
    <location>
        <begin position="48"/>
        <end position="51"/>
    </location>
</feature>
<feature type="turn" evidence="7">
    <location>
        <begin position="55"/>
        <end position="57"/>
    </location>
</feature>
<feature type="strand" evidence="7">
    <location>
        <begin position="58"/>
        <end position="62"/>
    </location>
</feature>
<feature type="strand" evidence="9">
    <location>
        <begin position="65"/>
        <end position="67"/>
    </location>
</feature>
<feature type="turn" evidence="8">
    <location>
        <begin position="72"/>
        <end position="74"/>
    </location>
</feature>
<feature type="strand" evidence="8">
    <location>
        <begin position="77"/>
        <end position="79"/>
    </location>
</feature>
<feature type="strand" evidence="8">
    <location>
        <begin position="86"/>
        <end position="89"/>
    </location>
</feature>
<feature type="strand" evidence="8">
    <location>
        <begin position="94"/>
        <end position="97"/>
    </location>
</feature>
<feature type="strand" evidence="8">
    <location>
        <begin position="99"/>
        <end position="102"/>
    </location>
</feature>